<reference key="1">
    <citation type="journal article" date="2004" name="Plant Cell Physiol.">
        <title>Molecular and biochemical characterization of three WD-repeat-domain-containing inositol polyphosphate 5-phosphatases in Arabidopsis thaliana.</title>
        <authorList>
            <person name="Zhong R."/>
            <person name="Ye Z.-H."/>
        </authorList>
    </citation>
    <scope>NUCLEOTIDE SEQUENCE [GENOMIC DNA / MRNA] (ISOFORM 1)</scope>
    <scope>FUNCTION</scope>
    <scope>TISSUE SPECIFICITY</scope>
    <scope>INDUCTION</scope>
    <scope>COFACTOR</scope>
    <scope>BIOPHYSICOCHEMICAL PROPERTIES</scope>
    <scope>CATALYTIC ACTIVITY</scope>
    <source>
        <strain>cv. Columbia</strain>
    </source>
</reference>
<reference key="2">
    <citation type="journal article" date="2005" name="Plant Physiol.">
        <title>At5PTase13 modulates cotyledon vein development through regulating auxin homeostasis.</title>
        <authorList>
            <person name="Lin W.-H."/>
            <person name="Wang Y."/>
            <person name="Mueller-Roeber B."/>
            <person name="Brearley C.A."/>
            <person name="Xu Z.-H."/>
            <person name="Xue H.-W."/>
        </authorList>
    </citation>
    <scope>NUCLEOTIDE SEQUENCE [MRNA] (ISOFORM 2)</scope>
    <scope>FUNCTION</scope>
    <scope>TISSUE SPECIFICITY</scope>
    <scope>DEVELOPMENTAL STAGE</scope>
    <scope>DISRUPTION PHENOTYPE</scope>
    <source>
        <strain>cv. Columbia</strain>
        <tissue>Hypocotyl</tissue>
    </source>
</reference>
<reference key="3">
    <citation type="journal article" date="2000" name="Nature">
        <title>Sequence and analysis of chromosome 1 of the plant Arabidopsis thaliana.</title>
        <authorList>
            <person name="Theologis A."/>
            <person name="Ecker J.R."/>
            <person name="Palm C.J."/>
            <person name="Federspiel N.A."/>
            <person name="Kaul S."/>
            <person name="White O."/>
            <person name="Alonso J."/>
            <person name="Altafi H."/>
            <person name="Araujo R."/>
            <person name="Bowman C.L."/>
            <person name="Brooks S.Y."/>
            <person name="Buehler E."/>
            <person name="Chan A."/>
            <person name="Chao Q."/>
            <person name="Chen H."/>
            <person name="Cheuk R.F."/>
            <person name="Chin C.W."/>
            <person name="Chung M.K."/>
            <person name="Conn L."/>
            <person name="Conway A.B."/>
            <person name="Conway A.R."/>
            <person name="Creasy T.H."/>
            <person name="Dewar K."/>
            <person name="Dunn P."/>
            <person name="Etgu P."/>
            <person name="Feldblyum T.V."/>
            <person name="Feng J.-D."/>
            <person name="Fong B."/>
            <person name="Fujii C.Y."/>
            <person name="Gill J.E."/>
            <person name="Goldsmith A.D."/>
            <person name="Haas B."/>
            <person name="Hansen N.F."/>
            <person name="Hughes B."/>
            <person name="Huizar L."/>
            <person name="Hunter J.L."/>
            <person name="Jenkins J."/>
            <person name="Johnson-Hopson C."/>
            <person name="Khan S."/>
            <person name="Khaykin E."/>
            <person name="Kim C.J."/>
            <person name="Koo H.L."/>
            <person name="Kremenetskaia I."/>
            <person name="Kurtz D.B."/>
            <person name="Kwan A."/>
            <person name="Lam B."/>
            <person name="Langin-Hooper S."/>
            <person name="Lee A."/>
            <person name="Lee J.M."/>
            <person name="Lenz C.A."/>
            <person name="Li J.H."/>
            <person name="Li Y.-P."/>
            <person name="Lin X."/>
            <person name="Liu S.X."/>
            <person name="Liu Z.A."/>
            <person name="Luros J.S."/>
            <person name="Maiti R."/>
            <person name="Marziali A."/>
            <person name="Militscher J."/>
            <person name="Miranda M."/>
            <person name="Nguyen M."/>
            <person name="Nierman W.C."/>
            <person name="Osborne B.I."/>
            <person name="Pai G."/>
            <person name="Peterson J."/>
            <person name="Pham P.K."/>
            <person name="Rizzo M."/>
            <person name="Rooney T."/>
            <person name="Rowley D."/>
            <person name="Sakano H."/>
            <person name="Salzberg S.L."/>
            <person name="Schwartz J.R."/>
            <person name="Shinn P."/>
            <person name="Southwick A.M."/>
            <person name="Sun H."/>
            <person name="Tallon L.J."/>
            <person name="Tambunga G."/>
            <person name="Toriumi M.J."/>
            <person name="Town C.D."/>
            <person name="Utterback T."/>
            <person name="Van Aken S."/>
            <person name="Vaysberg M."/>
            <person name="Vysotskaia V.S."/>
            <person name="Walker M."/>
            <person name="Wu D."/>
            <person name="Yu G."/>
            <person name="Fraser C.M."/>
            <person name="Venter J.C."/>
            <person name="Davis R.W."/>
        </authorList>
    </citation>
    <scope>NUCLEOTIDE SEQUENCE [LARGE SCALE GENOMIC DNA]</scope>
    <source>
        <strain>cv. Columbia</strain>
    </source>
</reference>
<reference key="4">
    <citation type="journal article" date="2017" name="Plant J.">
        <title>Araport11: a complete reannotation of the Arabidopsis thaliana reference genome.</title>
        <authorList>
            <person name="Cheng C.Y."/>
            <person name="Krishnakumar V."/>
            <person name="Chan A.P."/>
            <person name="Thibaud-Nissen F."/>
            <person name="Schobel S."/>
            <person name="Town C.D."/>
        </authorList>
    </citation>
    <scope>GENOME REANNOTATION</scope>
    <source>
        <strain>cv. Columbia</strain>
    </source>
</reference>
<reference key="5">
    <citation type="journal article" date="2001" name="Plant Physiol.">
        <title>Molecular characterization of At5PTase1, an inositol phosphatase capable of terminating inositol trisphosphate signaling.</title>
        <authorList>
            <person name="Berdy S.E."/>
            <person name="Kudla J."/>
            <person name="Gruissem W."/>
            <person name="Gillaspy G.E."/>
        </authorList>
    </citation>
    <scope>GENE FAMILY</scope>
</reference>
<reference key="6">
    <citation type="journal article" date="2008" name="Plant Cell">
        <title>An inositol polyphosphate 5-phosphatase functions in PHOTOTROPIN1 signaling in Arabidopsis by altering cytosolic Ca2+.</title>
        <authorList>
            <person name="Chen X."/>
            <person name="Lin W.-H."/>
            <person name="Wang Y."/>
            <person name="Luan S."/>
            <person name="Xue H.-W."/>
        </authorList>
    </citation>
    <scope>FUNCTION</scope>
    <scope>INDUCTION</scope>
    <scope>DISRUPTION PHENOTYPE</scope>
    <scope>LACK OF INTERACTION WITH PHOT1</scope>
    <source>
        <strain>cv. Columbia</strain>
    </source>
</reference>
<reference key="7">
    <citation type="journal article" date="2008" name="Plant Physiol.">
        <title>Interaction of the WD40 domain of a myoinositol polyphosphate 5-phosphatase with SnRK1 links inositol, sugar, and stress signaling.</title>
        <authorList>
            <person name="Ananieva E.A."/>
            <person name="Gillaspy G.E."/>
            <person name="Ely A."/>
            <person name="Burnette R.N."/>
            <person name="Erickson F.L."/>
        </authorList>
    </citation>
    <scope>INTERACTION WITH KIN10</scope>
    <scope>FUNCTION</scope>
    <scope>DISRUPTION PHENOTYPE</scope>
    <scope>SUBCELLULAR LOCATION</scope>
    <source>
        <strain>cv. Columbia</strain>
    </source>
</reference>
<reference key="8">
    <citation type="journal article" date="2009" name="Cell Res.">
        <title>The role of Arabidopsis 5PTase13 in root gravitropism through modulation of vesicle trafficking.</title>
        <authorList>
            <person name="Wang Y."/>
            <person name="Lin W.H."/>
            <person name="Chen X."/>
            <person name="Xue H.W."/>
        </authorList>
    </citation>
    <scope>DISRUPTION PHENOTYPE</scope>
    <scope>FUNCTION</scope>
</reference>
<reference key="9">
    <citation type="journal article" date="2012" name="Development">
        <title>Inositol polyphosphate 5-phosphatase-controlled Ins(1,4,5)P3/Ca2+ is crucial for maintaining pollen dormancy and regulating early germination of pollen.</title>
        <authorList>
            <person name="Wang Y."/>
            <person name="Chu Y.J."/>
            <person name="Xue H.W."/>
        </authorList>
    </citation>
    <scope>DISRUPTION PHENOTYPE</scope>
    <scope>TISSUE SPECIFICITY</scope>
    <scope>FUNCTION</scope>
</reference>
<gene>
    <name evidence="12" type="primary">IP5P13</name>
    <name evidence="11" type="synonym">5PTASE13</name>
    <name type="synonym">IPP6</name>
    <name evidence="13" type="ordered locus">At1g05630</name>
    <name evidence="14" type="ORF">F3F20.8</name>
</gene>
<name>IP5PD_ARATH</name>
<proteinExistence type="evidence at protein level"/>
<comment type="function">
    <text evidence="4 5 6 7 8 9">Converts inositol 1,4,5-trisphosphate (Ins(1,4,5)P3) to inositol 1,4-bisphosphate. Modulates cotyledon vein development through regulating auxin homeostasis. Involved in blue light responses. Decreases the amount of KIN10 degraded by the proteasome under low nutrient conditions. Participates with IP5P12 in the control of Ins(1,4,5)P3/Ca(2+) levels that is crucial for maintaining pollen dormancy and regulating early germination of pollen. May modulate auxin transport by regulating vesicle trafficking and thereby plays a role in root gravitropism.</text>
</comment>
<comment type="catalytic activity">
    <reaction evidence="4">
        <text>1D-myo-inositol 1,4,5-trisphosphate + H2O = 1D-myo-inositol 1,4-bisphosphate + phosphate</text>
        <dbReference type="Rhea" id="RHEA:19797"/>
        <dbReference type="ChEBI" id="CHEBI:15377"/>
        <dbReference type="ChEBI" id="CHEBI:43474"/>
        <dbReference type="ChEBI" id="CHEBI:58282"/>
        <dbReference type="ChEBI" id="CHEBI:203600"/>
        <dbReference type="EC" id="3.1.3.56"/>
    </reaction>
</comment>
<comment type="cofactor">
    <cofactor evidence="4">
        <name>Mg(2+)</name>
        <dbReference type="ChEBI" id="CHEBI:18420"/>
    </cofactor>
</comment>
<comment type="biophysicochemical properties">
    <kinetics>
        <KM evidence="4">651 uM for Ins(1,4,5)P3</KM>
    </kinetics>
</comment>
<comment type="subunit">
    <text evidence="7">Interacts with KIN10, but not with PHOT1.</text>
</comment>
<comment type="subcellular location">
    <subcellularLocation>
        <location evidence="7">Nucleus</location>
    </subcellularLocation>
</comment>
<comment type="alternative products">
    <event type="alternative splicing"/>
    <isoform>
        <id>Q9SYK4-1</id>
        <name>1</name>
        <sequence type="displayed"/>
    </isoform>
    <isoform>
        <id>Q9SYK4-2</id>
        <name>2</name>
        <sequence type="described" ref="VSP_036161"/>
    </isoform>
</comment>
<comment type="tissue specificity">
    <text evidence="4 5 9">Expressed in young seedlings and flowers. Highly expressed in anther and pollen grains, but not in pistils. Not detected in maturated roots, stems and rosette leaves.</text>
</comment>
<comment type="developmental stage">
    <text evidence="5">Detected in cotyledons prior to seed germination. Restricted to the cotyledon tip until 2 days after seed germination and then detected in the cotyledon or cotyledon veins on days 3 to 7.</text>
</comment>
<comment type="induction">
    <text evidence="4 6">By abscisic acid, wounding and at a lower level, by cold and salt treatment. Down-regulated by blue light irradiation.</text>
</comment>
<comment type="domain">
    <text>The WD40 domain (1-533) is interacting with KIN10.</text>
</comment>
<comment type="disruption phenotype">
    <text evidence="5 6 7 8 9">Defect in development of the cotyledon veins. Altered auxin homeostasis and reduced abscisic acid sensitivity. Shortened hypocotyls and expanded cotyledons in response to blue light irradiation. Precocious pollen germination within anthers. Elevated sensitivity to gravistimulation in root gravitropic responses.</text>
</comment>
<comment type="similarity">
    <text evidence="12">Belongs to the inositol polyphosphate 5-phosphatase family.</text>
</comment>
<comment type="sequence caution" evidence="12">
    <conflict type="frameshift">
        <sequence resource="EMBL-CDS" id="CAC82096"/>
    </conflict>
</comment>
<accession>Q9SYK4</accession>
<accession>F4IAA0</accession>
<accession>Q712D7</accession>
<keyword id="KW-0025">Alternative splicing</keyword>
<keyword id="KW-0378">Hydrolase</keyword>
<keyword id="KW-1017">Isopeptide bond</keyword>
<keyword id="KW-0460">Magnesium</keyword>
<keyword id="KW-0479">Metal-binding</keyword>
<keyword id="KW-0539">Nucleus</keyword>
<keyword id="KW-1185">Reference proteome</keyword>
<keyword id="KW-0677">Repeat</keyword>
<keyword id="KW-0832">Ubl conjugation</keyword>
<keyword id="KW-0853">WD repeat</keyword>
<dbReference type="EC" id="3.1.3.56" evidence="4"/>
<dbReference type="EMBL" id="AY761188">
    <property type="protein sequence ID" value="AAV87315.1"/>
    <property type="molecule type" value="mRNA"/>
</dbReference>
<dbReference type="EMBL" id="AY761192">
    <property type="protein sequence ID" value="AAV87319.1"/>
    <property type="molecule type" value="Genomic_DNA"/>
</dbReference>
<dbReference type="EMBL" id="AC007153">
    <property type="protein sequence ID" value="AAD30615.1"/>
    <property type="molecule type" value="Genomic_DNA"/>
</dbReference>
<dbReference type="EMBL" id="CP002684">
    <property type="protein sequence ID" value="AEE27868.1"/>
    <property type="molecule type" value="Genomic_DNA"/>
</dbReference>
<dbReference type="EMBL" id="CP002684">
    <property type="protein sequence ID" value="AEE27869.1"/>
    <property type="molecule type" value="Genomic_DNA"/>
</dbReference>
<dbReference type="EMBL" id="AJ297426">
    <property type="protein sequence ID" value="CAC82096.1"/>
    <property type="status" value="ALT_FRAME"/>
    <property type="molecule type" value="mRNA"/>
</dbReference>
<dbReference type="PIR" id="D86190">
    <property type="entry name" value="D86190"/>
</dbReference>
<dbReference type="RefSeq" id="NP_001030976.1">
    <molecule id="Q9SYK4-1"/>
    <property type="nucleotide sequence ID" value="NM_001035899.2"/>
</dbReference>
<dbReference type="RefSeq" id="NP_172054.3">
    <molecule id="Q9SYK4-2"/>
    <property type="nucleotide sequence ID" value="NM_100443.5"/>
</dbReference>
<dbReference type="SMR" id="Q9SYK4"/>
<dbReference type="BioGRID" id="22311">
    <property type="interactions" value="1"/>
</dbReference>
<dbReference type="FunCoup" id="Q9SYK4">
    <property type="interactions" value="19"/>
</dbReference>
<dbReference type="IntAct" id="Q9SYK4">
    <property type="interactions" value="1"/>
</dbReference>
<dbReference type="STRING" id="3702.Q9SYK4"/>
<dbReference type="iPTMnet" id="Q9SYK4"/>
<dbReference type="PaxDb" id="3702-AT1G05630.1"/>
<dbReference type="ProteomicsDB" id="238945">
    <molecule id="Q9SYK4-1"/>
</dbReference>
<dbReference type="EnsemblPlants" id="AT1G05630.1">
    <molecule id="Q9SYK4-2"/>
    <property type="protein sequence ID" value="AT1G05630.1"/>
    <property type="gene ID" value="AT1G05630"/>
</dbReference>
<dbReference type="EnsemblPlants" id="AT1G05630.2">
    <molecule id="Q9SYK4-1"/>
    <property type="protein sequence ID" value="AT1G05630.2"/>
    <property type="gene ID" value="AT1G05630"/>
</dbReference>
<dbReference type="GeneID" id="837069"/>
<dbReference type="Gramene" id="AT1G05630.1">
    <molecule id="Q9SYK4-2"/>
    <property type="protein sequence ID" value="AT1G05630.1"/>
    <property type="gene ID" value="AT1G05630"/>
</dbReference>
<dbReference type="Gramene" id="AT1G05630.2">
    <molecule id="Q9SYK4-1"/>
    <property type="protein sequence ID" value="AT1G05630.2"/>
    <property type="gene ID" value="AT1G05630"/>
</dbReference>
<dbReference type="KEGG" id="ath:AT1G05630"/>
<dbReference type="Araport" id="AT1G05630"/>
<dbReference type="TAIR" id="AT1G05630">
    <property type="gene designation" value="5PTASE13"/>
</dbReference>
<dbReference type="eggNOG" id="KOG0565">
    <property type="taxonomic scope" value="Eukaryota"/>
</dbReference>
<dbReference type="InParanoid" id="Q9SYK4"/>
<dbReference type="OMA" id="FEERISW"/>
<dbReference type="PhylomeDB" id="Q9SYK4"/>
<dbReference type="BioCyc" id="ARA:AT1G05630-MONOMER"/>
<dbReference type="BioCyc" id="MetaCyc:AT1G05630-MONOMER"/>
<dbReference type="BRENDA" id="3.1.3.36">
    <property type="organism ID" value="399"/>
</dbReference>
<dbReference type="BRENDA" id="3.1.3.56">
    <property type="organism ID" value="399"/>
</dbReference>
<dbReference type="SABIO-RK" id="Q9SYK4"/>
<dbReference type="PRO" id="PR:Q9SYK4"/>
<dbReference type="Proteomes" id="UP000006548">
    <property type="component" value="Chromosome 1"/>
</dbReference>
<dbReference type="ExpressionAtlas" id="Q9SYK4">
    <property type="expression patterns" value="baseline and differential"/>
</dbReference>
<dbReference type="GO" id="GO:0005634">
    <property type="term" value="C:nucleus"/>
    <property type="evidence" value="ECO:0000314"/>
    <property type="project" value="TAIR"/>
</dbReference>
<dbReference type="GO" id="GO:0052658">
    <property type="term" value="F:inositol-1,4,5-trisphosphate 5-phosphatase activity"/>
    <property type="evidence" value="ECO:0000314"/>
    <property type="project" value="TAIR"/>
</dbReference>
<dbReference type="GO" id="GO:0046872">
    <property type="term" value="F:metal ion binding"/>
    <property type="evidence" value="ECO:0007669"/>
    <property type="project" value="UniProtKB-KW"/>
</dbReference>
<dbReference type="GO" id="GO:0009630">
    <property type="term" value="P:gravitropism"/>
    <property type="evidence" value="ECO:0000315"/>
    <property type="project" value="UniProtKB"/>
</dbReference>
<dbReference type="GO" id="GO:0010087">
    <property type="term" value="P:phloem or xylem histogenesis"/>
    <property type="evidence" value="ECO:0000315"/>
    <property type="project" value="TAIR"/>
</dbReference>
<dbReference type="GO" id="GO:0046856">
    <property type="term" value="P:phosphatidylinositol dephosphorylation"/>
    <property type="evidence" value="ECO:0007669"/>
    <property type="project" value="InterPro"/>
</dbReference>
<dbReference type="GO" id="GO:0009846">
    <property type="term" value="P:pollen germination"/>
    <property type="evidence" value="ECO:0000316"/>
    <property type="project" value="UniProtKB"/>
</dbReference>
<dbReference type="GO" id="GO:0009737">
    <property type="term" value="P:response to abscisic acid"/>
    <property type="evidence" value="ECO:0000315"/>
    <property type="project" value="TAIR"/>
</dbReference>
<dbReference type="GO" id="GO:0009637">
    <property type="term" value="P:response to blue light"/>
    <property type="evidence" value="ECO:0000315"/>
    <property type="project" value="TAIR"/>
</dbReference>
<dbReference type="GO" id="GO:0009743">
    <property type="term" value="P:response to carbohydrate"/>
    <property type="evidence" value="ECO:0000315"/>
    <property type="project" value="TAIR"/>
</dbReference>
<dbReference type="GO" id="GO:0007584">
    <property type="term" value="P:response to nutrient"/>
    <property type="evidence" value="ECO:0000315"/>
    <property type="project" value="TAIR"/>
</dbReference>
<dbReference type="GO" id="GO:0009611">
    <property type="term" value="P:response to wounding"/>
    <property type="evidence" value="ECO:0000270"/>
    <property type="project" value="TAIR"/>
</dbReference>
<dbReference type="GO" id="GO:0048364">
    <property type="term" value="P:root development"/>
    <property type="evidence" value="ECO:0000315"/>
    <property type="project" value="TAIR"/>
</dbReference>
<dbReference type="GO" id="GO:0010182">
    <property type="term" value="P:sugar mediated signaling pathway"/>
    <property type="evidence" value="ECO:0000315"/>
    <property type="project" value="TAIR"/>
</dbReference>
<dbReference type="CDD" id="cd09074">
    <property type="entry name" value="INPP5c"/>
    <property type="match status" value="1"/>
</dbReference>
<dbReference type="FunFam" id="2.130.10.10:FF:000677">
    <property type="entry name" value="Type I inositol polyphosphate 5-phosphatase 13"/>
    <property type="match status" value="1"/>
</dbReference>
<dbReference type="FunFam" id="2.130.10.10:FF:001061">
    <property type="entry name" value="Type I inositol polyphosphate 5-phosphatase 13"/>
    <property type="match status" value="1"/>
</dbReference>
<dbReference type="FunFam" id="3.60.10.10:FF:000011">
    <property type="entry name" value="Type II inositol polyphosphate 5-phosphatase 15"/>
    <property type="match status" value="1"/>
</dbReference>
<dbReference type="Gene3D" id="3.60.10.10">
    <property type="entry name" value="Endonuclease/exonuclease/phosphatase"/>
    <property type="match status" value="1"/>
</dbReference>
<dbReference type="Gene3D" id="2.130.10.10">
    <property type="entry name" value="YVTN repeat-like/Quinoprotein amine dehydrogenase"/>
    <property type="match status" value="2"/>
</dbReference>
<dbReference type="InterPro" id="IPR056454">
    <property type="entry name" value="Beta-prop_IP5PC_F"/>
</dbReference>
<dbReference type="InterPro" id="IPR036691">
    <property type="entry name" value="Endo/exonu/phosph_ase_sf"/>
</dbReference>
<dbReference type="InterPro" id="IPR056455">
    <property type="entry name" value="Ig-like_IP5PC_F"/>
</dbReference>
<dbReference type="InterPro" id="IPR046985">
    <property type="entry name" value="IP5"/>
</dbReference>
<dbReference type="InterPro" id="IPR000300">
    <property type="entry name" value="IPPc"/>
</dbReference>
<dbReference type="InterPro" id="IPR015943">
    <property type="entry name" value="WD40/YVTN_repeat-like_dom_sf"/>
</dbReference>
<dbReference type="InterPro" id="IPR001680">
    <property type="entry name" value="WD40_rpt"/>
</dbReference>
<dbReference type="PANTHER" id="PTHR11200">
    <property type="entry name" value="INOSITOL 5-PHOSPHATASE"/>
    <property type="match status" value="1"/>
</dbReference>
<dbReference type="PANTHER" id="PTHR11200:SF272">
    <property type="entry name" value="TYPE I INOSITOL POLYPHOSPHATE 5-PHOSPHATASE 13"/>
    <property type="match status" value="1"/>
</dbReference>
<dbReference type="Pfam" id="PF23754">
    <property type="entry name" value="Beta-prop_IP5PC_F"/>
    <property type="match status" value="1"/>
</dbReference>
<dbReference type="Pfam" id="PF22669">
    <property type="entry name" value="Exo_endo_phos2"/>
    <property type="match status" value="1"/>
</dbReference>
<dbReference type="Pfam" id="PF23755">
    <property type="entry name" value="Ig-like_IP5PC_F"/>
    <property type="match status" value="1"/>
</dbReference>
<dbReference type="SMART" id="SM00128">
    <property type="entry name" value="IPPc"/>
    <property type="match status" value="1"/>
</dbReference>
<dbReference type="SMART" id="SM00320">
    <property type="entry name" value="WD40"/>
    <property type="match status" value="4"/>
</dbReference>
<dbReference type="SUPFAM" id="SSF56219">
    <property type="entry name" value="DNase I-like"/>
    <property type="match status" value="1"/>
</dbReference>
<dbReference type="SUPFAM" id="SSF101908">
    <property type="entry name" value="Putative isomerase YbhE"/>
    <property type="match status" value="1"/>
</dbReference>
<protein>
    <recommendedName>
        <fullName evidence="10">Type I inositol polyphosphate 5-phosphatase 13</fullName>
        <shortName evidence="10">At5PTase13</shortName>
        <ecNumber evidence="4">3.1.3.56</ecNumber>
    </recommendedName>
</protein>
<evidence type="ECO:0000250" key="1">
    <source>
        <dbReference type="UniProtKB" id="O80560"/>
    </source>
</evidence>
<evidence type="ECO:0000250" key="2">
    <source>
        <dbReference type="UniProtKB" id="Q84MA2"/>
    </source>
</evidence>
<evidence type="ECO:0000256" key="3">
    <source>
        <dbReference type="SAM" id="MobiDB-lite"/>
    </source>
</evidence>
<evidence type="ECO:0000269" key="4">
    <source>
    </source>
</evidence>
<evidence type="ECO:0000269" key="5">
    <source>
    </source>
</evidence>
<evidence type="ECO:0000269" key="6">
    <source>
    </source>
</evidence>
<evidence type="ECO:0000269" key="7">
    <source>
    </source>
</evidence>
<evidence type="ECO:0000269" key="8">
    <source>
    </source>
</evidence>
<evidence type="ECO:0000269" key="9">
    <source>
    </source>
</evidence>
<evidence type="ECO:0000303" key="10">
    <source>
    </source>
</evidence>
<evidence type="ECO:0000303" key="11">
    <source>
    </source>
</evidence>
<evidence type="ECO:0000305" key="12"/>
<evidence type="ECO:0000312" key="13">
    <source>
        <dbReference type="Araport" id="AT1G05630"/>
    </source>
</evidence>
<evidence type="ECO:0000312" key="14">
    <source>
        <dbReference type="EMBL" id="AAD30615.1"/>
    </source>
</evidence>
<feature type="chain" id="PRO_0000359743" description="Type I inositol polyphosphate 5-phosphatase 13">
    <location>
        <begin position="1"/>
        <end position="1136"/>
    </location>
</feature>
<feature type="repeat" description="WD 1">
    <location>
        <begin position="147"/>
        <end position="185"/>
    </location>
</feature>
<feature type="repeat" description="WD 2">
    <location>
        <begin position="205"/>
        <end position="244"/>
    </location>
</feature>
<feature type="repeat" description="WD 3">
    <location>
        <begin position="259"/>
        <end position="297"/>
    </location>
</feature>
<feature type="repeat" description="WD 4">
    <location>
        <begin position="436"/>
        <end position="475"/>
    </location>
</feature>
<feature type="repeat" description="WD 5">
    <location>
        <begin position="515"/>
        <end position="552"/>
    </location>
</feature>
<feature type="region of interest" description="Catalytic 1" evidence="2">
    <location>
        <begin position="782"/>
        <end position="798"/>
    </location>
</feature>
<feature type="region of interest" description="Catalytic 2" evidence="2">
    <location>
        <begin position="861"/>
        <end position="876"/>
    </location>
</feature>
<feature type="region of interest" description="Disordered" evidence="3">
    <location>
        <begin position="1104"/>
        <end position="1136"/>
    </location>
</feature>
<feature type="compositionally biased region" description="Basic and acidic residues" evidence="3">
    <location>
        <begin position="1124"/>
        <end position="1136"/>
    </location>
</feature>
<feature type="cross-link" description="Glycyl lysine isopeptide (Lys-Gly) (interchain with G-Cter in ubiquitin)" evidence="1">
    <location>
        <position position="940"/>
    </location>
</feature>
<feature type="splice variant" id="VSP_036161" description="In isoform 2." evidence="12">
    <original>A</original>
    <variation>AAGMVPYLFLSCSLGFSTYLFWLLYSSGLPWALSL</variation>
    <location>
        <position position="750"/>
    </location>
</feature>
<feature type="sequence conflict" description="In Ref. 3; CAC82096." evidence="12" ref="3">
    <original>V</original>
    <variation>I</variation>
    <location>
        <position position="739"/>
    </location>
</feature>
<organism>
    <name type="scientific">Arabidopsis thaliana</name>
    <name type="common">Mouse-ear cress</name>
    <dbReference type="NCBI Taxonomy" id="3702"/>
    <lineage>
        <taxon>Eukaryota</taxon>
        <taxon>Viridiplantae</taxon>
        <taxon>Streptophyta</taxon>
        <taxon>Embryophyta</taxon>
        <taxon>Tracheophyta</taxon>
        <taxon>Spermatophyta</taxon>
        <taxon>Magnoliopsida</taxon>
        <taxon>eudicotyledons</taxon>
        <taxon>Gunneridae</taxon>
        <taxon>Pentapetalae</taxon>
        <taxon>rosids</taxon>
        <taxon>malvids</taxon>
        <taxon>Brassicales</taxon>
        <taxon>Brassicaceae</taxon>
        <taxon>Camelineae</taxon>
        <taxon>Arabidopsis</taxon>
    </lineage>
</organism>
<sequence>MDSLIIEEEDEEALATLVPVPPRRKTHSYSLQFDHKPHHQIRKHSLDEVPRSATLASEAVYFDSSDDEFSTGGNITENAADETNAGAEEYTIVNPPPNVGLGDDDTEPLPEFIGAGGGSGIFKVPVRAAVHPGRPPCLELRPHPLRETQTGRFLRNIACTETQLWAGQENGIRFWNLEDAYEAGCGIGGQVPRGDEDTAPFHESVTTSPTMCLVADQSNKLLWSGHKDGKIRAWKMDQSSVSHDDDDSDPFKERVSWLAHRGPVNSIVISSYGDMWSCSEGGVIKIWPWDTLEKSLLLKPEEKHMAALLVERSAIDLRSQVTVNGTCSISSSEVKFLLADSVRAKVWAVQSLSFSIWDARSKDLLKVLNVDGQVENRGDLPPIQDQQVDDEMKLKFFSASKREKPQGFLQRSRNAIMGAAGAVRRVATRSAGAFSEDTRKTEAIVLAVDGTIWTGSISGLIVQWDGNGNRLRDVNHHHRPVLCFCTFGDRIYVGYASGYIQVLDLDGKLISSWVSHNEPVIKLAAGGGFIFSLATHGGVRGWYVTSPGPLDNIIRTELSQKETLYARQDNVRILIGTWNVGQGRASHDALMSWLGSVTSDVGIVAVGLQEVEMGAGFLAMSAAKETVGLEGSAVGQWWIDAIGKALDEKNTFERMGSRQLAGLLISLWARKDIRTHVGDLDVAAVPCGFGRAIGNKGGVGLRIRVYDRIMCFVNCHLAAHLEAVNRRNADFNHIFRLMVFSRGQNLSNAAAAGVSTSAYTTKSNTIPSTGAEEIKSDLAAADMVAFFGDFNYRLFGITYDEARDFISQRSFDWLRERDQLRAEMKVGKVFQGMREALITFPPTYKFERNRSGLGGYDSGEKKRIPAWCDRVIYRDTQSSPFSESNLQCPVVSSVIMYEACMDVTESDHKPVRCKFHATIAHVDKSVRRQELGKIIRSNEKILSIFEDLRFVPETSVSTNNIVLQSQDTVILTITNNSPTSQAIFNILCGGQAVVKDDGEDADYNPRGSFGLPRWLEVSPAAGIINPEGSVDVKVHHEDFYSMEEYVDGIPQNWWCEDTRDKEAILMVNIRGSCSTTLRSHSVKVRHCFSARVCLLENRPTNLTKNLGGSRRYPTDITRNGSTRPRTEDSVRRGKSR</sequence>